<keyword id="KW-0021">Allosteric enzyme</keyword>
<keyword id="KW-0328">Glycosyltransferase</keyword>
<keyword id="KW-0342">GTP-binding</keyword>
<keyword id="KW-0460">Magnesium</keyword>
<keyword id="KW-0547">Nucleotide-binding</keyword>
<keyword id="KW-0808">Transferase</keyword>
<evidence type="ECO:0000255" key="1">
    <source>
        <dbReference type="HAMAP-Rule" id="MF_01218"/>
    </source>
</evidence>
<dbReference type="EC" id="2.4.2.9" evidence="1"/>
<dbReference type="EMBL" id="CP000123">
    <property type="protein sequence ID" value="ABC01714.1"/>
    <property type="molecule type" value="Genomic_DNA"/>
</dbReference>
<dbReference type="RefSeq" id="WP_011386976.1">
    <property type="nucleotide sequence ID" value="NC_007633.1"/>
</dbReference>
<dbReference type="SMR" id="Q2ST42"/>
<dbReference type="GeneID" id="23778969"/>
<dbReference type="KEGG" id="mcp:MCAP_0076"/>
<dbReference type="HOGENOM" id="CLU_067096_2_2_14"/>
<dbReference type="PhylomeDB" id="Q2ST42"/>
<dbReference type="UniPathway" id="UPA00574">
    <property type="reaction ID" value="UER00636"/>
</dbReference>
<dbReference type="Proteomes" id="UP000001928">
    <property type="component" value="Chromosome"/>
</dbReference>
<dbReference type="GO" id="GO:0005525">
    <property type="term" value="F:GTP binding"/>
    <property type="evidence" value="ECO:0007669"/>
    <property type="project" value="UniProtKB-KW"/>
</dbReference>
<dbReference type="GO" id="GO:0000287">
    <property type="term" value="F:magnesium ion binding"/>
    <property type="evidence" value="ECO:0007669"/>
    <property type="project" value="UniProtKB-UniRule"/>
</dbReference>
<dbReference type="GO" id="GO:0004845">
    <property type="term" value="F:uracil phosphoribosyltransferase activity"/>
    <property type="evidence" value="ECO:0007669"/>
    <property type="project" value="UniProtKB-UniRule"/>
</dbReference>
<dbReference type="GO" id="GO:0044206">
    <property type="term" value="P:UMP salvage"/>
    <property type="evidence" value="ECO:0007669"/>
    <property type="project" value="UniProtKB-UniRule"/>
</dbReference>
<dbReference type="GO" id="GO:0006223">
    <property type="term" value="P:uracil salvage"/>
    <property type="evidence" value="ECO:0007669"/>
    <property type="project" value="InterPro"/>
</dbReference>
<dbReference type="CDD" id="cd06223">
    <property type="entry name" value="PRTases_typeI"/>
    <property type="match status" value="1"/>
</dbReference>
<dbReference type="FunFam" id="3.40.50.2020:FF:000003">
    <property type="entry name" value="Uracil phosphoribosyltransferase"/>
    <property type="match status" value="1"/>
</dbReference>
<dbReference type="Gene3D" id="3.40.50.2020">
    <property type="match status" value="1"/>
</dbReference>
<dbReference type="HAMAP" id="MF_01218_B">
    <property type="entry name" value="Upp_B"/>
    <property type="match status" value="1"/>
</dbReference>
<dbReference type="InterPro" id="IPR000836">
    <property type="entry name" value="PRibTrfase_dom"/>
</dbReference>
<dbReference type="InterPro" id="IPR029057">
    <property type="entry name" value="PRTase-like"/>
</dbReference>
<dbReference type="InterPro" id="IPR034332">
    <property type="entry name" value="Upp_B"/>
</dbReference>
<dbReference type="InterPro" id="IPR050054">
    <property type="entry name" value="UPRTase/APRTase"/>
</dbReference>
<dbReference type="InterPro" id="IPR005765">
    <property type="entry name" value="Ura_phspho_trans"/>
</dbReference>
<dbReference type="NCBIfam" id="NF001097">
    <property type="entry name" value="PRK00129.1"/>
    <property type="match status" value="1"/>
</dbReference>
<dbReference type="NCBIfam" id="TIGR01091">
    <property type="entry name" value="upp"/>
    <property type="match status" value="1"/>
</dbReference>
<dbReference type="PANTHER" id="PTHR32315">
    <property type="entry name" value="ADENINE PHOSPHORIBOSYLTRANSFERASE"/>
    <property type="match status" value="1"/>
</dbReference>
<dbReference type="PANTHER" id="PTHR32315:SF4">
    <property type="entry name" value="URACIL PHOSPHORIBOSYLTRANSFERASE, CHLOROPLASTIC"/>
    <property type="match status" value="1"/>
</dbReference>
<dbReference type="Pfam" id="PF14681">
    <property type="entry name" value="UPRTase"/>
    <property type="match status" value="1"/>
</dbReference>
<dbReference type="SUPFAM" id="SSF53271">
    <property type="entry name" value="PRTase-like"/>
    <property type="match status" value="1"/>
</dbReference>
<reference key="1">
    <citation type="submission" date="2005-09" db="EMBL/GenBank/DDBJ databases">
        <authorList>
            <person name="Glass J.I."/>
            <person name="Lartigue C."/>
            <person name="Pfannkoch C."/>
            <person name="Baden-Tillson H."/>
            <person name="Smith H.O."/>
            <person name="Venter J.C."/>
            <person name="Roske K."/>
            <person name="Wise K.S."/>
            <person name="Calcutt M.J."/>
            <person name="Nelson W.C."/>
            <person name="Nierman W.C."/>
        </authorList>
    </citation>
    <scope>NUCLEOTIDE SEQUENCE [LARGE SCALE GENOMIC DNA]</scope>
    <source>
        <strain>California kid / ATCC 27343 / NCTC 10154</strain>
    </source>
</reference>
<accession>Q2ST42</accession>
<organism>
    <name type="scientific">Mycoplasma capricolum subsp. capricolum (strain California kid / ATCC 27343 / NCTC 10154)</name>
    <dbReference type="NCBI Taxonomy" id="340047"/>
    <lineage>
        <taxon>Bacteria</taxon>
        <taxon>Bacillati</taxon>
        <taxon>Mycoplasmatota</taxon>
        <taxon>Mollicutes</taxon>
        <taxon>Mycoplasmataceae</taxon>
        <taxon>Mycoplasma</taxon>
    </lineage>
</organism>
<name>UPP_MYCCT</name>
<sequence>MAFTEIKHPLIIDKLTRMRKTETSSKDFRENLSEIAQLMVYEIFRDLKLESVDIETPVSKTTGYTINQPVVLVPILRAGIGMLDGIQKLIPTARIAHIGLYRDEETLETHQYFAKTTKDIDKSYVIVVDPMLATGGSACKAIDIVKQWGAKEIKFVCLVAVEPGIKRLQEQHPDVEIYAASKDEKLNEKGYIVPGLGDAGDRIFGTK</sequence>
<comment type="function">
    <text evidence="1">Catalyzes the conversion of uracil and 5-phospho-alpha-D-ribose 1-diphosphate (PRPP) to UMP and diphosphate.</text>
</comment>
<comment type="catalytic activity">
    <reaction evidence="1">
        <text>UMP + diphosphate = 5-phospho-alpha-D-ribose 1-diphosphate + uracil</text>
        <dbReference type="Rhea" id="RHEA:13017"/>
        <dbReference type="ChEBI" id="CHEBI:17568"/>
        <dbReference type="ChEBI" id="CHEBI:33019"/>
        <dbReference type="ChEBI" id="CHEBI:57865"/>
        <dbReference type="ChEBI" id="CHEBI:58017"/>
        <dbReference type="EC" id="2.4.2.9"/>
    </reaction>
</comment>
<comment type="cofactor">
    <cofactor evidence="1">
        <name>Mg(2+)</name>
        <dbReference type="ChEBI" id="CHEBI:18420"/>
    </cofactor>
    <text evidence="1">Binds 1 Mg(2+) ion per subunit. The magnesium is bound as Mg-PRPP.</text>
</comment>
<comment type="activity regulation">
    <text evidence="1">Allosterically activated by GTP.</text>
</comment>
<comment type="pathway">
    <text evidence="1">Pyrimidine metabolism; UMP biosynthesis via salvage pathway; UMP from uracil: step 1/1.</text>
</comment>
<comment type="similarity">
    <text evidence="1">Belongs to the UPRTase family.</text>
</comment>
<protein>
    <recommendedName>
        <fullName evidence="1">Uracil phosphoribosyltransferase</fullName>
        <ecNumber evidence="1">2.4.2.9</ecNumber>
    </recommendedName>
    <alternativeName>
        <fullName evidence="1">UMP pyrophosphorylase</fullName>
    </alternativeName>
    <alternativeName>
        <fullName evidence="1">UPRTase</fullName>
    </alternativeName>
</protein>
<gene>
    <name evidence="1" type="primary">upp</name>
    <name type="ordered locus">MCAP_0076</name>
</gene>
<feature type="chain" id="PRO_1000053744" description="Uracil phosphoribosyltransferase">
    <location>
        <begin position="1"/>
        <end position="207"/>
    </location>
</feature>
<feature type="binding site" evidence="1">
    <location>
        <position position="77"/>
    </location>
    <ligand>
        <name>5-phospho-alpha-D-ribose 1-diphosphate</name>
        <dbReference type="ChEBI" id="CHEBI:58017"/>
    </ligand>
</feature>
<feature type="binding site" evidence="1">
    <location>
        <position position="102"/>
    </location>
    <ligand>
        <name>5-phospho-alpha-D-ribose 1-diphosphate</name>
        <dbReference type="ChEBI" id="CHEBI:58017"/>
    </ligand>
</feature>
<feature type="binding site" evidence="1">
    <location>
        <begin position="129"/>
        <end position="137"/>
    </location>
    <ligand>
        <name>5-phospho-alpha-D-ribose 1-diphosphate</name>
        <dbReference type="ChEBI" id="CHEBI:58017"/>
    </ligand>
</feature>
<feature type="binding site" evidence="1">
    <location>
        <position position="192"/>
    </location>
    <ligand>
        <name>uracil</name>
        <dbReference type="ChEBI" id="CHEBI:17568"/>
    </ligand>
</feature>
<feature type="binding site" evidence="1">
    <location>
        <begin position="197"/>
        <end position="199"/>
    </location>
    <ligand>
        <name>uracil</name>
        <dbReference type="ChEBI" id="CHEBI:17568"/>
    </ligand>
</feature>
<feature type="binding site" evidence="1">
    <location>
        <position position="198"/>
    </location>
    <ligand>
        <name>5-phospho-alpha-D-ribose 1-diphosphate</name>
        <dbReference type="ChEBI" id="CHEBI:58017"/>
    </ligand>
</feature>
<proteinExistence type="inferred from homology"/>